<organism>
    <name type="scientific">Cupriavidus metallidurans (strain ATCC 43123 / DSM 2839 / NBRC 102507 / CH34)</name>
    <name type="common">Ralstonia metallidurans</name>
    <dbReference type="NCBI Taxonomy" id="266264"/>
    <lineage>
        <taxon>Bacteria</taxon>
        <taxon>Pseudomonadati</taxon>
        <taxon>Pseudomonadota</taxon>
        <taxon>Betaproteobacteria</taxon>
        <taxon>Burkholderiales</taxon>
        <taxon>Burkholderiaceae</taxon>
        <taxon>Cupriavidus</taxon>
    </lineage>
</organism>
<comment type="function">
    <text evidence="1">May play a key role in the regulation of the intracellular concentration of adenosylhomocysteine.</text>
</comment>
<comment type="catalytic activity">
    <reaction evidence="1">
        <text>S-adenosyl-L-homocysteine + H2O = L-homocysteine + adenosine</text>
        <dbReference type="Rhea" id="RHEA:21708"/>
        <dbReference type="ChEBI" id="CHEBI:15377"/>
        <dbReference type="ChEBI" id="CHEBI:16335"/>
        <dbReference type="ChEBI" id="CHEBI:57856"/>
        <dbReference type="ChEBI" id="CHEBI:58199"/>
        <dbReference type="EC" id="3.13.2.1"/>
    </reaction>
</comment>
<comment type="cofactor">
    <cofactor evidence="1">
        <name>NAD(+)</name>
        <dbReference type="ChEBI" id="CHEBI:57540"/>
    </cofactor>
    <text evidence="1">Binds 1 NAD(+) per subunit.</text>
</comment>
<comment type="pathway">
    <text evidence="1">Amino-acid biosynthesis; L-homocysteine biosynthesis; L-homocysteine from S-adenosyl-L-homocysteine: step 1/1.</text>
</comment>
<comment type="subcellular location">
    <subcellularLocation>
        <location evidence="1">Cytoplasm</location>
    </subcellularLocation>
</comment>
<comment type="similarity">
    <text evidence="1">Belongs to the adenosylhomocysteinase family.</text>
</comment>
<reference key="1">
    <citation type="journal article" date="2010" name="PLoS ONE">
        <title>The complete genome sequence of Cupriavidus metallidurans strain CH34, a master survivalist in harsh and anthropogenic environments.</title>
        <authorList>
            <person name="Janssen P.J."/>
            <person name="Van Houdt R."/>
            <person name="Moors H."/>
            <person name="Monsieurs P."/>
            <person name="Morin N."/>
            <person name="Michaux A."/>
            <person name="Benotmane M.A."/>
            <person name="Leys N."/>
            <person name="Vallaeys T."/>
            <person name="Lapidus A."/>
            <person name="Monchy S."/>
            <person name="Medigue C."/>
            <person name="Taghavi S."/>
            <person name="McCorkle S."/>
            <person name="Dunn J."/>
            <person name="van der Lelie D."/>
            <person name="Mergeay M."/>
        </authorList>
    </citation>
    <scope>NUCLEOTIDE SEQUENCE [LARGE SCALE GENOMIC DNA]</scope>
    <source>
        <strain>ATCC 43123 / DSM 2839 / NBRC 102507 / CH34</strain>
    </source>
</reference>
<protein>
    <recommendedName>
        <fullName evidence="1">Adenosylhomocysteinase</fullName>
        <ecNumber evidence="1">3.13.2.1</ecNumber>
    </recommendedName>
    <alternativeName>
        <fullName evidence="1">S-adenosyl-L-homocysteine hydrolase</fullName>
        <shortName evidence="1">AdoHcyase</shortName>
    </alternativeName>
</protein>
<evidence type="ECO:0000255" key="1">
    <source>
        <dbReference type="HAMAP-Rule" id="MF_00563"/>
    </source>
</evidence>
<proteinExistence type="inferred from homology"/>
<accession>Q1LS20</accession>
<gene>
    <name evidence="1" type="primary">ahcY</name>
    <name type="ordered locus">Rmet_0170</name>
</gene>
<name>SAHH_CUPMC</name>
<keyword id="KW-0963">Cytoplasm</keyword>
<keyword id="KW-0378">Hydrolase</keyword>
<keyword id="KW-0520">NAD</keyword>
<keyword id="KW-0554">One-carbon metabolism</keyword>
<keyword id="KW-1185">Reference proteome</keyword>
<sequence>MNAVTDLKQDYIVADIGLAGWGRKEIAIAETEMPGLMAIRDEFAAAQPLKGARIAGSLHMTIQTAVLIETLKALGADVRWASCNIFSTQDHAAAAIAASGTPVFAFKGESLKEYWDFTHRIFDWADGGTPNMILDDGGDATLLLHLGARAEKDASLIAKPTSEEETFLFAAIKEKLAKDSTWYSRNLAAIRGVTEETTTGVHRLYQMAQKGELKFPAINVNDSVTKSKFDNLYGCRESLVDGIKRATDVMIAGKIAVVAGYGDVGKGSAQALRALSAQVWVTEIDPICALQAAMEGYRVVTMDYAAEHGDIFVTCTGNYHVITHDHMAKMKDQAIVCNIGHFDNEIDIASVEKYEWDEIKPQVDHVKFPDGKKIIILAKGRLVNLGCATGHPSYVMSSSFANQTIAQIELWAERDSGKYPVGVYVLPKHLDEKVARLQLRKLNAQLTELTEQQAAYIGVKKEGPYKADHYRY</sequence>
<dbReference type="EC" id="3.13.2.1" evidence="1"/>
<dbReference type="EMBL" id="CP000352">
    <property type="protein sequence ID" value="ABF07056.1"/>
    <property type="molecule type" value="Genomic_DNA"/>
</dbReference>
<dbReference type="RefSeq" id="WP_008641860.1">
    <property type="nucleotide sequence ID" value="NC_007973.1"/>
</dbReference>
<dbReference type="SMR" id="Q1LS20"/>
<dbReference type="STRING" id="266264.Rmet_0170"/>
<dbReference type="GeneID" id="60822893"/>
<dbReference type="KEGG" id="rme:Rmet_0170"/>
<dbReference type="eggNOG" id="COG0499">
    <property type="taxonomic scope" value="Bacteria"/>
</dbReference>
<dbReference type="HOGENOM" id="CLU_025194_2_1_4"/>
<dbReference type="UniPathway" id="UPA00314">
    <property type="reaction ID" value="UER00076"/>
</dbReference>
<dbReference type="Proteomes" id="UP000002429">
    <property type="component" value="Chromosome"/>
</dbReference>
<dbReference type="GO" id="GO:0005829">
    <property type="term" value="C:cytosol"/>
    <property type="evidence" value="ECO:0007669"/>
    <property type="project" value="TreeGrafter"/>
</dbReference>
<dbReference type="GO" id="GO:0004013">
    <property type="term" value="F:adenosylhomocysteinase activity"/>
    <property type="evidence" value="ECO:0007669"/>
    <property type="project" value="UniProtKB-UniRule"/>
</dbReference>
<dbReference type="GO" id="GO:0071269">
    <property type="term" value="P:L-homocysteine biosynthetic process"/>
    <property type="evidence" value="ECO:0007669"/>
    <property type="project" value="UniProtKB-UniRule"/>
</dbReference>
<dbReference type="GO" id="GO:0006730">
    <property type="term" value="P:one-carbon metabolic process"/>
    <property type="evidence" value="ECO:0007669"/>
    <property type="project" value="UniProtKB-KW"/>
</dbReference>
<dbReference type="GO" id="GO:0033353">
    <property type="term" value="P:S-adenosylmethionine cycle"/>
    <property type="evidence" value="ECO:0007669"/>
    <property type="project" value="TreeGrafter"/>
</dbReference>
<dbReference type="CDD" id="cd00401">
    <property type="entry name" value="SAHH"/>
    <property type="match status" value="1"/>
</dbReference>
<dbReference type="FunFam" id="3.40.50.720:FF:000004">
    <property type="entry name" value="Adenosylhomocysteinase"/>
    <property type="match status" value="1"/>
</dbReference>
<dbReference type="Gene3D" id="3.40.50.1480">
    <property type="entry name" value="Adenosylhomocysteinase-like"/>
    <property type="match status" value="1"/>
</dbReference>
<dbReference type="Gene3D" id="3.40.50.720">
    <property type="entry name" value="NAD(P)-binding Rossmann-like Domain"/>
    <property type="match status" value="1"/>
</dbReference>
<dbReference type="HAMAP" id="MF_00563">
    <property type="entry name" value="AdoHcyase"/>
    <property type="match status" value="1"/>
</dbReference>
<dbReference type="InterPro" id="IPR042172">
    <property type="entry name" value="Adenosylhomocyst_ase-like_sf"/>
</dbReference>
<dbReference type="InterPro" id="IPR000043">
    <property type="entry name" value="Adenosylhomocysteinase-like"/>
</dbReference>
<dbReference type="InterPro" id="IPR015878">
    <property type="entry name" value="Ado_hCys_hydrolase_NAD-bd"/>
</dbReference>
<dbReference type="InterPro" id="IPR036291">
    <property type="entry name" value="NAD(P)-bd_dom_sf"/>
</dbReference>
<dbReference type="InterPro" id="IPR020082">
    <property type="entry name" value="S-Ado-L-homoCys_hydrolase_CS"/>
</dbReference>
<dbReference type="NCBIfam" id="TIGR00936">
    <property type="entry name" value="ahcY"/>
    <property type="match status" value="1"/>
</dbReference>
<dbReference type="NCBIfam" id="NF004005">
    <property type="entry name" value="PRK05476.2-3"/>
    <property type="match status" value="1"/>
</dbReference>
<dbReference type="PANTHER" id="PTHR23420">
    <property type="entry name" value="ADENOSYLHOMOCYSTEINASE"/>
    <property type="match status" value="1"/>
</dbReference>
<dbReference type="PANTHER" id="PTHR23420:SF0">
    <property type="entry name" value="ADENOSYLHOMOCYSTEINASE"/>
    <property type="match status" value="1"/>
</dbReference>
<dbReference type="Pfam" id="PF05221">
    <property type="entry name" value="AdoHcyase"/>
    <property type="match status" value="1"/>
</dbReference>
<dbReference type="Pfam" id="PF00670">
    <property type="entry name" value="AdoHcyase_NAD"/>
    <property type="match status" value="1"/>
</dbReference>
<dbReference type="PIRSF" id="PIRSF001109">
    <property type="entry name" value="Ad_hcy_hydrolase"/>
    <property type="match status" value="1"/>
</dbReference>
<dbReference type="SMART" id="SM00996">
    <property type="entry name" value="AdoHcyase"/>
    <property type="match status" value="1"/>
</dbReference>
<dbReference type="SMART" id="SM00997">
    <property type="entry name" value="AdoHcyase_NAD"/>
    <property type="match status" value="1"/>
</dbReference>
<dbReference type="SUPFAM" id="SSF52283">
    <property type="entry name" value="Formate/glycerate dehydrogenase catalytic domain-like"/>
    <property type="match status" value="1"/>
</dbReference>
<dbReference type="SUPFAM" id="SSF51735">
    <property type="entry name" value="NAD(P)-binding Rossmann-fold domains"/>
    <property type="match status" value="1"/>
</dbReference>
<dbReference type="PROSITE" id="PS00738">
    <property type="entry name" value="ADOHCYASE_1"/>
    <property type="match status" value="1"/>
</dbReference>
<dbReference type="PROSITE" id="PS00739">
    <property type="entry name" value="ADOHCYASE_2"/>
    <property type="match status" value="1"/>
</dbReference>
<feature type="chain" id="PRO_1000129299" description="Adenosylhomocysteinase">
    <location>
        <begin position="1"/>
        <end position="472"/>
    </location>
</feature>
<feature type="binding site" evidence="1">
    <location>
        <position position="61"/>
    </location>
    <ligand>
        <name>substrate</name>
    </ligand>
</feature>
<feature type="binding site" evidence="1">
    <location>
        <position position="136"/>
    </location>
    <ligand>
        <name>substrate</name>
    </ligand>
</feature>
<feature type="binding site" evidence="1">
    <location>
        <position position="196"/>
    </location>
    <ligand>
        <name>substrate</name>
    </ligand>
</feature>
<feature type="binding site" evidence="1">
    <location>
        <begin position="197"/>
        <end position="199"/>
    </location>
    <ligand>
        <name>NAD(+)</name>
        <dbReference type="ChEBI" id="CHEBI:57540"/>
    </ligand>
</feature>
<feature type="binding site" evidence="1">
    <location>
        <position position="226"/>
    </location>
    <ligand>
        <name>substrate</name>
    </ligand>
</feature>
<feature type="binding site" evidence="1">
    <location>
        <position position="230"/>
    </location>
    <ligand>
        <name>substrate</name>
    </ligand>
</feature>
<feature type="binding site" evidence="1">
    <location>
        <position position="231"/>
    </location>
    <ligand>
        <name>NAD(+)</name>
        <dbReference type="ChEBI" id="CHEBI:57540"/>
    </ligand>
</feature>
<feature type="binding site" evidence="1">
    <location>
        <begin position="260"/>
        <end position="265"/>
    </location>
    <ligand>
        <name>NAD(+)</name>
        <dbReference type="ChEBI" id="CHEBI:57540"/>
    </ligand>
</feature>
<feature type="binding site" evidence="1">
    <location>
        <position position="283"/>
    </location>
    <ligand>
        <name>NAD(+)</name>
        <dbReference type="ChEBI" id="CHEBI:57540"/>
    </ligand>
</feature>
<feature type="binding site" evidence="1">
    <location>
        <position position="318"/>
    </location>
    <ligand>
        <name>NAD(+)</name>
        <dbReference type="ChEBI" id="CHEBI:57540"/>
    </ligand>
</feature>
<feature type="binding site" evidence="1">
    <location>
        <begin position="339"/>
        <end position="341"/>
    </location>
    <ligand>
        <name>NAD(+)</name>
        <dbReference type="ChEBI" id="CHEBI:57540"/>
    </ligand>
</feature>
<feature type="binding site" evidence="1">
    <location>
        <position position="384"/>
    </location>
    <ligand>
        <name>NAD(+)</name>
        <dbReference type="ChEBI" id="CHEBI:57540"/>
    </ligand>
</feature>